<evidence type="ECO:0000255" key="1">
    <source>
        <dbReference type="HAMAP-Rule" id="MF_00083"/>
    </source>
</evidence>
<keyword id="KW-0963">Cytoplasm</keyword>
<keyword id="KW-0378">Hydrolase</keyword>
<keyword id="KW-0694">RNA-binding</keyword>
<keyword id="KW-0820">tRNA-binding</keyword>
<organism>
    <name type="scientific">Staphylococcus aureus (strain USA300 / TCH1516)</name>
    <dbReference type="NCBI Taxonomy" id="451516"/>
    <lineage>
        <taxon>Bacteria</taxon>
        <taxon>Bacillati</taxon>
        <taxon>Bacillota</taxon>
        <taxon>Bacilli</taxon>
        <taxon>Bacillales</taxon>
        <taxon>Staphylococcaceae</taxon>
        <taxon>Staphylococcus</taxon>
    </lineage>
</organism>
<dbReference type="EC" id="3.1.1.29" evidence="1"/>
<dbReference type="EMBL" id="CP000730">
    <property type="protein sequence ID" value="ABX28522.1"/>
    <property type="molecule type" value="Genomic_DNA"/>
</dbReference>
<dbReference type="RefSeq" id="WP_000649791.1">
    <property type="nucleotide sequence ID" value="NC_010079.1"/>
</dbReference>
<dbReference type="SMR" id="A8Z0Z1"/>
<dbReference type="KEGG" id="sax:USA300HOU_0496"/>
<dbReference type="HOGENOM" id="CLU_062456_4_1_9"/>
<dbReference type="GO" id="GO:0005737">
    <property type="term" value="C:cytoplasm"/>
    <property type="evidence" value="ECO:0007669"/>
    <property type="project" value="UniProtKB-SubCell"/>
</dbReference>
<dbReference type="GO" id="GO:0004045">
    <property type="term" value="F:peptidyl-tRNA hydrolase activity"/>
    <property type="evidence" value="ECO:0007669"/>
    <property type="project" value="UniProtKB-UniRule"/>
</dbReference>
<dbReference type="GO" id="GO:0000049">
    <property type="term" value="F:tRNA binding"/>
    <property type="evidence" value="ECO:0007669"/>
    <property type="project" value="UniProtKB-UniRule"/>
</dbReference>
<dbReference type="GO" id="GO:0006515">
    <property type="term" value="P:protein quality control for misfolded or incompletely synthesized proteins"/>
    <property type="evidence" value="ECO:0007669"/>
    <property type="project" value="UniProtKB-UniRule"/>
</dbReference>
<dbReference type="GO" id="GO:0072344">
    <property type="term" value="P:rescue of stalled ribosome"/>
    <property type="evidence" value="ECO:0007669"/>
    <property type="project" value="UniProtKB-UniRule"/>
</dbReference>
<dbReference type="CDD" id="cd00462">
    <property type="entry name" value="PTH"/>
    <property type="match status" value="1"/>
</dbReference>
<dbReference type="FunFam" id="3.40.50.1470:FF:000001">
    <property type="entry name" value="Peptidyl-tRNA hydrolase"/>
    <property type="match status" value="1"/>
</dbReference>
<dbReference type="Gene3D" id="3.40.50.1470">
    <property type="entry name" value="Peptidyl-tRNA hydrolase"/>
    <property type="match status" value="1"/>
</dbReference>
<dbReference type="HAMAP" id="MF_00083">
    <property type="entry name" value="Pept_tRNA_hydro_bact"/>
    <property type="match status" value="1"/>
</dbReference>
<dbReference type="InterPro" id="IPR001328">
    <property type="entry name" value="Pept_tRNA_hydro"/>
</dbReference>
<dbReference type="InterPro" id="IPR018171">
    <property type="entry name" value="Pept_tRNA_hydro_CS"/>
</dbReference>
<dbReference type="InterPro" id="IPR036416">
    <property type="entry name" value="Pept_tRNA_hydro_sf"/>
</dbReference>
<dbReference type="NCBIfam" id="TIGR00447">
    <property type="entry name" value="pth"/>
    <property type="match status" value="1"/>
</dbReference>
<dbReference type="PANTHER" id="PTHR17224">
    <property type="entry name" value="PEPTIDYL-TRNA HYDROLASE"/>
    <property type="match status" value="1"/>
</dbReference>
<dbReference type="PANTHER" id="PTHR17224:SF1">
    <property type="entry name" value="PEPTIDYL-TRNA HYDROLASE"/>
    <property type="match status" value="1"/>
</dbReference>
<dbReference type="Pfam" id="PF01195">
    <property type="entry name" value="Pept_tRNA_hydro"/>
    <property type="match status" value="1"/>
</dbReference>
<dbReference type="SUPFAM" id="SSF53178">
    <property type="entry name" value="Peptidyl-tRNA hydrolase-like"/>
    <property type="match status" value="1"/>
</dbReference>
<dbReference type="PROSITE" id="PS01195">
    <property type="entry name" value="PEPT_TRNA_HYDROL_1"/>
    <property type="match status" value="1"/>
</dbReference>
<dbReference type="PROSITE" id="PS01196">
    <property type="entry name" value="PEPT_TRNA_HYDROL_2"/>
    <property type="match status" value="1"/>
</dbReference>
<protein>
    <recommendedName>
        <fullName evidence="1">Peptidyl-tRNA hydrolase</fullName>
        <shortName evidence="1">Pth</shortName>
        <ecNumber evidence="1">3.1.1.29</ecNumber>
    </recommendedName>
</protein>
<feature type="chain" id="PRO_1000075361" description="Peptidyl-tRNA hydrolase">
    <location>
        <begin position="1"/>
        <end position="190"/>
    </location>
</feature>
<feature type="active site" description="Proton acceptor" evidence="1">
    <location>
        <position position="19"/>
    </location>
</feature>
<feature type="binding site" evidence="1">
    <location>
        <position position="14"/>
    </location>
    <ligand>
        <name>tRNA</name>
        <dbReference type="ChEBI" id="CHEBI:17843"/>
    </ligand>
</feature>
<feature type="binding site" evidence="1">
    <location>
        <position position="64"/>
    </location>
    <ligand>
        <name>tRNA</name>
        <dbReference type="ChEBI" id="CHEBI:17843"/>
    </ligand>
</feature>
<feature type="binding site" evidence="1">
    <location>
        <position position="66"/>
    </location>
    <ligand>
        <name>tRNA</name>
        <dbReference type="ChEBI" id="CHEBI:17843"/>
    </ligand>
</feature>
<feature type="binding site" evidence="1">
    <location>
        <position position="112"/>
    </location>
    <ligand>
        <name>tRNA</name>
        <dbReference type="ChEBI" id="CHEBI:17843"/>
    </ligand>
</feature>
<feature type="site" description="Discriminates between blocked and unblocked aminoacyl-tRNA" evidence="1">
    <location>
        <position position="9"/>
    </location>
</feature>
<feature type="site" description="Stabilizes the basic form of H active site to accept a proton" evidence="1">
    <location>
        <position position="91"/>
    </location>
</feature>
<reference key="1">
    <citation type="journal article" date="2007" name="BMC Microbiol.">
        <title>Subtle genetic changes enhance virulence of methicillin resistant and sensitive Staphylococcus aureus.</title>
        <authorList>
            <person name="Highlander S.K."/>
            <person name="Hulten K.G."/>
            <person name="Qin X."/>
            <person name="Jiang H."/>
            <person name="Yerrapragada S."/>
            <person name="Mason E.O. Jr."/>
            <person name="Shang Y."/>
            <person name="Williams T.M."/>
            <person name="Fortunov R.M."/>
            <person name="Liu Y."/>
            <person name="Igboeli O."/>
            <person name="Petrosino J."/>
            <person name="Tirumalai M."/>
            <person name="Uzman A."/>
            <person name="Fox G.E."/>
            <person name="Cardenas A.M."/>
            <person name="Muzny D.M."/>
            <person name="Hemphill L."/>
            <person name="Ding Y."/>
            <person name="Dugan S."/>
            <person name="Blyth P.R."/>
            <person name="Buhay C.J."/>
            <person name="Dinh H.H."/>
            <person name="Hawes A.C."/>
            <person name="Holder M."/>
            <person name="Kovar C.L."/>
            <person name="Lee S.L."/>
            <person name="Liu W."/>
            <person name="Nazareth L.V."/>
            <person name="Wang Q."/>
            <person name="Zhou J."/>
            <person name="Kaplan S.L."/>
            <person name="Weinstock G.M."/>
        </authorList>
    </citation>
    <scope>NUCLEOTIDE SEQUENCE [LARGE SCALE GENOMIC DNA]</scope>
    <source>
        <strain>USA300 / TCH1516</strain>
    </source>
</reference>
<comment type="function">
    <text evidence="1">Hydrolyzes ribosome-free peptidyl-tRNAs (with 1 or more amino acids incorporated), which drop off the ribosome during protein synthesis, or as a result of ribosome stalling.</text>
</comment>
<comment type="function">
    <text evidence="1">Catalyzes the release of premature peptidyl moieties from peptidyl-tRNA molecules trapped in stalled 50S ribosomal subunits, and thus maintains levels of free tRNAs and 50S ribosomes.</text>
</comment>
<comment type="catalytic activity">
    <reaction evidence="1">
        <text>an N-acyl-L-alpha-aminoacyl-tRNA + H2O = an N-acyl-L-amino acid + a tRNA + H(+)</text>
        <dbReference type="Rhea" id="RHEA:54448"/>
        <dbReference type="Rhea" id="RHEA-COMP:10123"/>
        <dbReference type="Rhea" id="RHEA-COMP:13883"/>
        <dbReference type="ChEBI" id="CHEBI:15377"/>
        <dbReference type="ChEBI" id="CHEBI:15378"/>
        <dbReference type="ChEBI" id="CHEBI:59874"/>
        <dbReference type="ChEBI" id="CHEBI:78442"/>
        <dbReference type="ChEBI" id="CHEBI:138191"/>
        <dbReference type="EC" id="3.1.1.29"/>
    </reaction>
</comment>
<comment type="subunit">
    <text evidence="1">Monomer.</text>
</comment>
<comment type="subcellular location">
    <subcellularLocation>
        <location evidence="1">Cytoplasm</location>
    </subcellularLocation>
</comment>
<comment type="similarity">
    <text evidence="1">Belongs to the PTH family.</text>
</comment>
<sequence length="190" mass="21703">MKCIVGLGNIGKRFELTRHNIGFEVVDYILEKNNFSLDKQKFKGAYTIERMNGDKVLFIEPMTMMNLSGEAVAPIMDYYNVNPEDLIVLYDDLDLEQGQVRLRQKGSAGGHNGMKSIIKMLGTDQFKRIRIGVGRPTNGMTVPDYVLQRFSNDEMVTMEKVIEHAARAIEKFVETSRFDHVMNEFNGEVK</sequence>
<name>PTH_STAAT</name>
<accession>A8Z0Z1</accession>
<proteinExistence type="inferred from homology"/>
<gene>
    <name evidence="1" type="primary">pth</name>
    <name type="ordered locus">USA300HOU_0496</name>
</gene>